<accession>A1IIX5</accession>
<feature type="chain" id="PRO_0000454490" description="FADH(2)-dependent resorcinol hydroxylase, reductase component">
    <location>
        <begin position="1"/>
        <end position="179"/>
    </location>
</feature>
<organism>
    <name type="scientific">Rhizobium sp. (strain MTP-10005)</name>
    <dbReference type="NCBI Taxonomy" id="267998"/>
    <lineage>
        <taxon>Bacteria</taxon>
        <taxon>Pseudomonadati</taxon>
        <taxon>Pseudomonadota</taxon>
        <taxon>Alphaproteobacteria</taxon>
        <taxon>Hyphomicrobiales</taxon>
        <taxon>Rhizobiaceae</taxon>
        <taxon>Rhizobium/Agrobacterium group</taxon>
        <taxon>Rhizobium</taxon>
    </lineage>
</organism>
<dbReference type="EC" id="1.5.1.37" evidence="1"/>
<dbReference type="EMBL" id="AB266213">
    <property type="protein sequence ID" value="BAF44525.1"/>
    <property type="molecule type" value="Genomic_DNA"/>
</dbReference>
<dbReference type="SMR" id="A1IIX5"/>
<dbReference type="GO" id="GO:0010181">
    <property type="term" value="F:FMN binding"/>
    <property type="evidence" value="ECO:0007669"/>
    <property type="project" value="InterPro"/>
</dbReference>
<dbReference type="GO" id="GO:0042602">
    <property type="term" value="F:riboflavin reductase (NADPH) activity"/>
    <property type="evidence" value="ECO:0007669"/>
    <property type="project" value="TreeGrafter"/>
</dbReference>
<dbReference type="Gene3D" id="2.30.110.10">
    <property type="entry name" value="Electron Transport, Fmn-binding Protein, Chain A"/>
    <property type="match status" value="1"/>
</dbReference>
<dbReference type="InterPro" id="IPR002563">
    <property type="entry name" value="Flavin_Rdtase-like_dom"/>
</dbReference>
<dbReference type="InterPro" id="IPR050268">
    <property type="entry name" value="NADH-dep_flavin_reductase"/>
</dbReference>
<dbReference type="InterPro" id="IPR012349">
    <property type="entry name" value="Split_barrel_FMN-bd"/>
</dbReference>
<dbReference type="PANTHER" id="PTHR30466">
    <property type="entry name" value="FLAVIN REDUCTASE"/>
    <property type="match status" value="1"/>
</dbReference>
<dbReference type="PANTHER" id="PTHR30466:SF1">
    <property type="entry name" value="FMN REDUCTASE (NADH) RUTF"/>
    <property type="match status" value="1"/>
</dbReference>
<dbReference type="Pfam" id="PF01613">
    <property type="entry name" value="Flavin_Reduct"/>
    <property type="match status" value="1"/>
</dbReference>
<dbReference type="SMART" id="SM00903">
    <property type="entry name" value="Flavin_Reduct"/>
    <property type="match status" value="1"/>
</dbReference>
<dbReference type="SUPFAM" id="SSF50475">
    <property type="entry name" value="FMN-binding split barrel"/>
    <property type="match status" value="1"/>
</dbReference>
<reference key="1">
    <citation type="journal article" date="2007" name="J. Bacteriol.">
        <title>Biochemical and genetic analysis of the gamma-resorcylate (2,6-dihydroxybenzoate) catabolic pathway in Rhizobium sp. strain MTP-10005: identification and functional analysis of its gene cluster.</title>
        <authorList>
            <person name="Yoshida M."/>
            <person name="Oikawa T."/>
            <person name="Obata H."/>
            <person name="Abe K."/>
            <person name="Mihara H."/>
            <person name="Esaki N."/>
        </authorList>
    </citation>
    <scope>NUCLEOTIDE SEQUENCE [GENOMIC DNA]</scope>
    <scope>FUNCTION</scope>
    <scope>CATALYTIC ACTIVITY</scope>
    <scope>SUBUNIT</scope>
    <scope>INDUCTION</scope>
    <source>
        <strain>MTP-10005</strain>
    </source>
</reference>
<name>GRAD_RHIS5</name>
<keyword id="KW-0274">FAD</keyword>
<keyword id="KW-0285">Flavoprotein</keyword>
<keyword id="KW-0520">NAD</keyword>
<keyword id="KW-0560">Oxidoreductase</keyword>
<evidence type="ECO:0000269" key="1">
    <source>
    </source>
</evidence>
<evidence type="ECO:0000303" key="2">
    <source>
    </source>
</evidence>
<evidence type="ECO:0000305" key="3"/>
<gene>
    <name evidence="2" type="primary">graD</name>
</gene>
<comment type="function">
    <text evidence="1">Involved in the gamma-resorcylate (2,6-dihydroxybenzoate) catabolism (PubMed:17158677). Reductase component of the resorcinol hydroxylase, which catalyzes the FADPH-dependent conversion of resorcinol to hydroxyquinol (PubMed:17158677). Catalyzes the reduction of FAD by NADH. The reduced flavin is then transferred to the oxygenase component GraA (PubMed:17158677).</text>
</comment>
<comment type="catalytic activity">
    <reaction evidence="1">
        <text>FADH2 + NAD(+) = FAD + NADH + 2 H(+)</text>
        <dbReference type="Rhea" id="RHEA:30147"/>
        <dbReference type="ChEBI" id="CHEBI:15378"/>
        <dbReference type="ChEBI" id="CHEBI:57540"/>
        <dbReference type="ChEBI" id="CHEBI:57692"/>
        <dbReference type="ChEBI" id="CHEBI:57945"/>
        <dbReference type="ChEBI" id="CHEBI:58307"/>
        <dbReference type="EC" id="1.5.1.37"/>
    </reaction>
    <physiologicalReaction direction="right-to-left" evidence="1">
        <dbReference type="Rhea" id="RHEA:30149"/>
    </physiologicalReaction>
</comment>
<comment type="pathway">
    <text evidence="3">Aromatic compound metabolism.</text>
</comment>
<comment type="subunit">
    <text evidence="1">The FADH(2)-dependent resorcinol hydroxylase is composed of two subunits, GraA (the oxygenase component) and GraD (the reductase component). Both subunits are required for activity.</text>
</comment>
<comment type="induction">
    <text evidence="1">Induced in the presence of gamma-resorcylate.</text>
</comment>
<comment type="similarity">
    <text evidence="3">Belongs to the non-flavoprotein flavin reductase family.</text>
</comment>
<proteinExistence type="evidence at protein level"/>
<sequence length="179" mass="19429">MTSALFGLNNLAPEGVGQNFRTTMRRFPATVTVITACATGDQRDHGMTVTAVTSVSMEPPSLLVCLNNRTFLHELLLCRPDFIVNVLTQDQIALSDAFSGKVSPEERFRNGEWQRHDNGVLYLPTAHAAIACRRVAAMPYGTHTVFIGQVVSADVSETTRPLLYENAQYCAASPAGLSA</sequence>
<protein>
    <recommendedName>
        <fullName evidence="3">FADH(2)-dependent resorcinol hydroxylase, reductase component</fullName>
        <ecNumber evidence="1">1.5.1.37</ecNumber>
    </recommendedName>
</protein>